<reference key="1">
    <citation type="submission" date="2008-08" db="EMBL/GenBank/DDBJ databases">
        <title>Complete sequence of Anaeromyxobacter sp. K.</title>
        <authorList>
            <consortium name="US DOE Joint Genome Institute"/>
            <person name="Lucas S."/>
            <person name="Copeland A."/>
            <person name="Lapidus A."/>
            <person name="Glavina del Rio T."/>
            <person name="Dalin E."/>
            <person name="Tice H."/>
            <person name="Bruce D."/>
            <person name="Goodwin L."/>
            <person name="Pitluck S."/>
            <person name="Saunders E."/>
            <person name="Brettin T."/>
            <person name="Detter J.C."/>
            <person name="Han C."/>
            <person name="Larimer F."/>
            <person name="Land M."/>
            <person name="Hauser L."/>
            <person name="Kyrpides N."/>
            <person name="Ovchinnikiva G."/>
            <person name="Beliaev A."/>
        </authorList>
    </citation>
    <scope>NUCLEOTIDE SEQUENCE [LARGE SCALE GENOMIC DNA]</scope>
    <source>
        <strain>K</strain>
    </source>
</reference>
<keyword id="KW-0963">Cytoplasm</keyword>
<keyword id="KW-0489">Methyltransferase</keyword>
<keyword id="KW-0698">rRNA processing</keyword>
<keyword id="KW-0949">S-adenosyl-L-methionine</keyword>
<keyword id="KW-0808">Transferase</keyword>
<accession>B4UER3</accession>
<dbReference type="EC" id="2.1.1.199" evidence="1"/>
<dbReference type="EMBL" id="CP001131">
    <property type="protein sequence ID" value="ACG75030.1"/>
    <property type="molecule type" value="Genomic_DNA"/>
</dbReference>
<dbReference type="RefSeq" id="WP_012527791.1">
    <property type="nucleotide sequence ID" value="NC_011145.1"/>
</dbReference>
<dbReference type="SMR" id="B4UER3"/>
<dbReference type="KEGG" id="ank:AnaeK_3819"/>
<dbReference type="HOGENOM" id="CLU_038422_3_0_7"/>
<dbReference type="OrthoDB" id="9806637at2"/>
<dbReference type="Proteomes" id="UP000001871">
    <property type="component" value="Chromosome"/>
</dbReference>
<dbReference type="GO" id="GO:0005737">
    <property type="term" value="C:cytoplasm"/>
    <property type="evidence" value="ECO:0007669"/>
    <property type="project" value="UniProtKB-SubCell"/>
</dbReference>
<dbReference type="GO" id="GO:0071424">
    <property type="term" value="F:rRNA (cytosine-N4-)-methyltransferase activity"/>
    <property type="evidence" value="ECO:0007669"/>
    <property type="project" value="UniProtKB-UniRule"/>
</dbReference>
<dbReference type="GO" id="GO:0070475">
    <property type="term" value="P:rRNA base methylation"/>
    <property type="evidence" value="ECO:0007669"/>
    <property type="project" value="UniProtKB-UniRule"/>
</dbReference>
<dbReference type="Gene3D" id="1.10.150.170">
    <property type="entry name" value="Putative methyltransferase TM0872, insert domain"/>
    <property type="match status" value="1"/>
</dbReference>
<dbReference type="Gene3D" id="3.40.50.150">
    <property type="entry name" value="Vaccinia Virus protein VP39"/>
    <property type="match status" value="1"/>
</dbReference>
<dbReference type="HAMAP" id="MF_01007">
    <property type="entry name" value="16SrRNA_methyltr_H"/>
    <property type="match status" value="1"/>
</dbReference>
<dbReference type="InterPro" id="IPR002903">
    <property type="entry name" value="RsmH"/>
</dbReference>
<dbReference type="InterPro" id="IPR023397">
    <property type="entry name" value="SAM-dep_MeTrfase_MraW_recog"/>
</dbReference>
<dbReference type="InterPro" id="IPR029063">
    <property type="entry name" value="SAM-dependent_MTases_sf"/>
</dbReference>
<dbReference type="NCBIfam" id="TIGR00006">
    <property type="entry name" value="16S rRNA (cytosine(1402)-N(4))-methyltransferase RsmH"/>
    <property type="match status" value="1"/>
</dbReference>
<dbReference type="PANTHER" id="PTHR11265:SF0">
    <property type="entry name" value="12S RRNA N4-METHYLCYTIDINE METHYLTRANSFERASE"/>
    <property type="match status" value="1"/>
</dbReference>
<dbReference type="PANTHER" id="PTHR11265">
    <property type="entry name" value="S-ADENOSYL-METHYLTRANSFERASE MRAW"/>
    <property type="match status" value="1"/>
</dbReference>
<dbReference type="Pfam" id="PF01795">
    <property type="entry name" value="Methyltransf_5"/>
    <property type="match status" value="1"/>
</dbReference>
<dbReference type="PIRSF" id="PIRSF004486">
    <property type="entry name" value="MraW"/>
    <property type="match status" value="1"/>
</dbReference>
<dbReference type="SUPFAM" id="SSF81799">
    <property type="entry name" value="Putative methyltransferase TM0872, insert domain"/>
    <property type="match status" value="1"/>
</dbReference>
<dbReference type="SUPFAM" id="SSF53335">
    <property type="entry name" value="S-adenosyl-L-methionine-dependent methyltransferases"/>
    <property type="match status" value="1"/>
</dbReference>
<proteinExistence type="inferred from homology"/>
<sequence>MSADFRHEPVLANEILELLRPRPGELFLDGTLGGGGHSGLLLEAGARVIALDKDPRALAAATARLARFGEAFRAVRSDFRDAKNVLQALGIAAVDGALVDLGVSSPQLDEAERGFSFSRPGPLDMRMGDTGETLEDLLRRIDERELARILREYGEEPFARPVARAVKAALETEAPLDTARLAEVVAGAIPRKAWPHRIHPATRTFQALRIAVNDELGALAAWLDGLPGVLAPGGRAAAISFHSLEDRMVKEKFRALTQACTCPPDLPVCACGAKASFAAITRKAVKASDEEIARNPRARSARLRAVEKLR</sequence>
<comment type="function">
    <text evidence="1">Specifically methylates the N4 position of cytidine in position 1402 (C1402) of 16S rRNA.</text>
</comment>
<comment type="catalytic activity">
    <reaction evidence="1">
        <text>cytidine(1402) in 16S rRNA + S-adenosyl-L-methionine = N(4)-methylcytidine(1402) in 16S rRNA + S-adenosyl-L-homocysteine + H(+)</text>
        <dbReference type="Rhea" id="RHEA:42928"/>
        <dbReference type="Rhea" id="RHEA-COMP:10286"/>
        <dbReference type="Rhea" id="RHEA-COMP:10287"/>
        <dbReference type="ChEBI" id="CHEBI:15378"/>
        <dbReference type="ChEBI" id="CHEBI:57856"/>
        <dbReference type="ChEBI" id="CHEBI:59789"/>
        <dbReference type="ChEBI" id="CHEBI:74506"/>
        <dbReference type="ChEBI" id="CHEBI:82748"/>
        <dbReference type="EC" id="2.1.1.199"/>
    </reaction>
</comment>
<comment type="subcellular location">
    <subcellularLocation>
        <location evidence="1">Cytoplasm</location>
    </subcellularLocation>
</comment>
<comment type="similarity">
    <text evidence="1">Belongs to the methyltransferase superfamily. RsmH family.</text>
</comment>
<protein>
    <recommendedName>
        <fullName evidence="1">Ribosomal RNA small subunit methyltransferase H</fullName>
        <ecNumber evidence="1">2.1.1.199</ecNumber>
    </recommendedName>
    <alternativeName>
        <fullName evidence="1">16S rRNA m(4)C1402 methyltransferase</fullName>
    </alternativeName>
    <alternativeName>
        <fullName evidence="1">rRNA (cytosine-N(4)-)-methyltransferase RsmH</fullName>
    </alternativeName>
</protein>
<organism>
    <name type="scientific">Anaeromyxobacter sp. (strain K)</name>
    <dbReference type="NCBI Taxonomy" id="447217"/>
    <lineage>
        <taxon>Bacteria</taxon>
        <taxon>Pseudomonadati</taxon>
        <taxon>Myxococcota</taxon>
        <taxon>Myxococcia</taxon>
        <taxon>Myxococcales</taxon>
        <taxon>Cystobacterineae</taxon>
        <taxon>Anaeromyxobacteraceae</taxon>
        <taxon>Anaeromyxobacter</taxon>
    </lineage>
</organism>
<gene>
    <name evidence="1" type="primary">rsmH</name>
    <name type="synonym">mraW</name>
    <name type="ordered locus">AnaeK_3819</name>
</gene>
<name>RSMH_ANASK</name>
<evidence type="ECO:0000255" key="1">
    <source>
        <dbReference type="HAMAP-Rule" id="MF_01007"/>
    </source>
</evidence>
<feature type="chain" id="PRO_0000386716" description="Ribosomal RNA small subunit methyltransferase H">
    <location>
        <begin position="1"/>
        <end position="310"/>
    </location>
</feature>
<feature type="binding site" evidence="1">
    <location>
        <begin position="35"/>
        <end position="37"/>
    </location>
    <ligand>
        <name>S-adenosyl-L-methionine</name>
        <dbReference type="ChEBI" id="CHEBI:59789"/>
    </ligand>
</feature>
<feature type="binding site" evidence="1">
    <location>
        <position position="52"/>
    </location>
    <ligand>
        <name>S-adenosyl-L-methionine</name>
        <dbReference type="ChEBI" id="CHEBI:59789"/>
    </ligand>
</feature>
<feature type="binding site" evidence="1">
    <location>
        <position position="79"/>
    </location>
    <ligand>
        <name>S-adenosyl-L-methionine</name>
        <dbReference type="ChEBI" id="CHEBI:59789"/>
    </ligand>
</feature>
<feature type="binding site" evidence="1">
    <location>
        <position position="100"/>
    </location>
    <ligand>
        <name>S-adenosyl-L-methionine</name>
        <dbReference type="ChEBI" id="CHEBI:59789"/>
    </ligand>
</feature>
<feature type="binding site" evidence="1">
    <location>
        <position position="107"/>
    </location>
    <ligand>
        <name>S-adenosyl-L-methionine</name>
        <dbReference type="ChEBI" id="CHEBI:59789"/>
    </ligand>
</feature>